<evidence type="ECO:0000255" key="1">
    <source>
        <dbReference type="HAMAP-Rule" id="MF_00402"/>
    </source>
</evidence>
<evidence type="ECO:0000305" key="2"/>
<reference key="1">
    <citation type="journal article" date="2006" name="Nat. Biotechnol.">
        <title>Complete genome sequence of the entomopathogenic and metabolically versatile soil bacterium Pseudomonas entomophila.</title>
        <authorList>
            <person name="Vodovar N."/>
            <person name="Vallenet D."/>
            <person name="Cruveiller S."/>
            <person name="Rouy Z."/>
            <person name="Barbe V."/>
            <person name="Acosta C."/>
            <person name="Cattolico L."/>
            <person name="Jubin C."/>
            <person name="Lajus A."/>
            <person name="Segurens B."/>
            <person name="Vacherie B."/>
            <person name="Wincker P."/>
            <person name="Weissenbach J."/>
            <person name="Lemaitre B."/>
            <person name="Medigue C."/>
            <person name="Boccard F."/>
        </authorList>
    </citation>
    <scope>NUCLEOTIDE SEQUENCE [LARGE SCALE GENOMIC DNA]</scope>
    <source>
        <strain>L48</strain>
    </source>
</reference>
<sequence length="116" mass="12998">MTNKIIQQLEAEQMSKEIPTFAPGDTVVVQVKVKEGDRSRLQAFEGVVIAKRNRGLNSAFTVRKISSGVGVERTFQTYSPQIDSLAVKRRGDVRKAKLYYLRDLSGKAARIKEKLS</sequence>
<accession>Q1I5Z1</accession>
<comment type="function">
    <text evidence="1">This protein is located at the 30S-50S ribosomal subunit interface and may play a role in the structure and function of the aminoacyl-tRNA binding site.</text>
</comment>
<comment type="similarity">
    <text evidence="1">Belongs to the bacterial ribosomal protein bL19 family.</text>
</comment>
<protein>
    <recommendedName>
        <fullName evidence="1">Large ribosomal subunit protein bL19</fullName>
    </recommendedName>
    <alternativeName>
        <fullName evidence="2">50S ribosomal protein L19</fullName>
    </alternativeName>
</protein>
<dbReference type="EMBL" id="CT573326">
    <property type="protein sequence ID" value="CAK16944.1"/>
    <property type="molecule type" value="Genomic_DNA"/>
</dbReference>
<dbReference type="RefSeq" id="WP_011535315.1">
    <property type="nucleotide sequence ID" value="NC_008027.1"/>
</dbReference>
<dbReference type="SMR" id="Q1I5Z1"/>
<dbReference type="STRING" id="384676.PSEEN4257"/>
<dbReference type="GeneID" id="88820685"/>
<dbReference type="KEGG" id="pen:PSEEN4257"/>
<dbReference type="eggNOG" id="COG0335">
    <property type="taxonomic scope" value="Bacteria"/>
</dbReference>
<dbReference type="HOGENOM" id="CLU_103507_2_1_6"/>
<dbReference type="OrthoDB" id="9803541at2"/>
<dbReference type="Proteomes" id="UP000000658">
    <property type="component" value="Chromosome"/>
</dbReference>
<dbReference type="GO" id="GO:0022625">
    <property type="term" value="C:cytosolic large ribosomal subunit"/>
    <property type="evidence" value="ECO:0007669"/>
    <property type="project" value="TreeGrafter"/>
</dbReference>
<dbReference type="GO" id="GO:0003735">
    <property type="term" value="F:structural constituent of ribosome"/>
    <property type="evidence" value="ECO:0007669"/>
    <property type="project" value="InterPro"/>
</dbReference>
<dbReference type="GO" id="GO:0006412">
    <property type="term" value="P:translation"/>
    <property type="evidence" value="ECO:0007669"/>
    <property type="project" value="UniProtKB-UniRule"/>
</dbReference>
<dbReference type="FunFam" id="2.30.30.790:FF:000001">
    <property type="entry name" value="50S ribosomal protein L19"/>
    <property type="match status" value="1"/>
</dbReference>
<dbReference type="Gene3D" id="2.30.30.790">
    <property type="match status" value="1"/>
</dbReference>
<dbReference type="HAMAP" id="MF_00402">
    <property type="entry name" value="Ribosomal_bL19"/>
    <property type="match status" value="1"/>
</dbReference>
<dbReference type="InterPro" id="IPR001857">
    <property type="entry name" value="Ribosomal_bL19"/>
</dbReference>
<dbReference type="InterPro" id="IPR018257">
    <property type="entry name" value="Ribosomal_bL19_CS"/>
</dbReference>
<dbReference type="InterPro" id="IPR038657">
    <property type="entry name" value="Ribosomal_bL19_sf"/>
</dbReference>
<dbReference type="InterPro" id="IPR008991">
    <property type="entry name" value="Translation_prot_SH3-like_sf"/>
</dbReference>
<dbReference type="NCBIfam" id="TIGR01024">
    <property type="entry name" value="rplS_bact"/>
    <property type="match status" value="1"/>
</dbReference>
<dbReference type="PANTHER" id="PTHR15680:SF9">
    <property type="entry name" value="LARGE RIBOSOMAL SUBUNIT PROTEIN BL19M"/>
    <property type="match status" value="1"/>
</dbReference>
<dbReference type="PANTHER" id="PTHR15680">
    <property type="entry name" value="RIBOSOMAL PROTEIN L19"/>
    <property type="match status" value="1"/>
</dbReference>
<dbReference type="Pfam" id="PF01245">
    <property type="entry name" value="Ribosomal_L19"/>
    <property type="match status" value="1"/>
</dbReference>
<dbReference type="PIRSF" id="PIRSF002191">
    <property type="entry name" value="Ribosomal_L19"/>
    <property type="match status" value="1"/>
</dbReference>
<dbReference type="PRINTS" id="PR00061">
    <property type="entry name" value="RIBOSOMALL19"/>
</dbReference>
<dbReference type="SUPFAM" id="SSF50104">
    <property type="entry name" value="Translation proteins SH3-like domain"/>
    <property type="match status" value="1"/>
</dbReference>
<dbReference type="PROSITE" id="PS01015">
    <property type="entry name" value="RIBOSOMAL_L19"/>
    <property type="match status" value="1"/>
</dbReference>
<feature type="chain" id="PRO_1000049721" description="Large ribosomal subunit protein bL19">
    <location>
        <begin position="1"/>
        <end position="116"/>
    </location>
</feature>
<proteinExistence type="inferred from homology"/>
<organism>
    <name type="scientific">Pseudomonas entomophila (strain L48)</name>
    <dbReference type="NCBI Taxonomy" id="384676"/>
    <lineage>
        <taxon>Bacteria</taxon>
        <taxon>Pseudomonadati</taxon>
        <taxon>Pseudomonadota</taxon>
        <taxon>Gammaproteobacteria</taxon>
        <taxon>Pseudomonadales</taxon>
        <taxon>Pseudomonadaceae</taxon>
        <taxon>Pseudomonas</taxon>
    </lineage>
</organism>
<gene>
    <name evidence="1" type="primary">rplS</name>
    <name type="ordered locus">PSEEN4257</name>
</gene>
<name>RL19_PSEE4</name>
<keyword id="KW-0687">Ribonucleoprotein</keyword>
<keyword id="KW-0689">Ribosomal protein</keyword>